<gene>
    <name type="ordered locus">Nwi_0368</name>
</gene>
<name>Y368_NITWN</name>
<reference key="1">
    <citation type="journal article" date="2006" name="Appl. Environ. Microbiol.">
        <title>Genome sequence of the chemolithoautotrophic nitrite-oxidizing bacterium Nitrobacter winogradskyi Nb-255.</title>
        <authorList>
            <person name="Starkenburg S.R."/>
            <person name="Chain P.S.G."/>
            <person name="Sayavedra-Soto L.A."/>
            <person name="Hauser L."/>
            <person name="Land M.L."/>
            <person name="Larimer F.W."/>
            <person name="Malfatti S.A."/>
            <person name="Klotz M.G."/>
            <person name="Bottomley P.J."/>
            <person name="Arp D.J."/>
            <person name="Hickey W.J."/>
        </authorList>
    </citation>
    <scope>NUCLEOTIDE SEQUENCE [LARGE SCALE GENOMIC DNA]</scope>
    <source>
        <strain>ATCC 25391 / DSM 10237 / CIP 104748 / NCIMB 11846 / Nb-255</strain>
    </source>
</reference>
<organism>
    <name type="scientific">Nitrobacter winogradskyi (strain ATCC 25391 / DSM 10237 / CIP 104748 / NCIMB 11846 / Nb-255)</name>
    <dbReference type="NCBI Taxonomy" id="323098"/>
    <lineage>
        <taxon>Bacteria</taxon>
        <taxon>Pseudomonadati</taxon>
        <taxon>Pseudomonadota</taxon>
        <taxon>Alphaproteobacteria</taxon>
        <taxon>Hyphomicrobiales</taxon>
        <taxon>Nitrobacteraceae</taxon>
        <taxon>Nitrobacter</taxon>
    </lineage>
</organism>
<evidence type="ECO:0000255" key="1">
    <source>
        <dbReference type="HAMAP-Rule" id="MF_00274"/>
    </source>
</evidence>
<accession>Q3SVQ6</accession>
<keyword id="KW-0963">Cytoplasm</keyword>
<keyword id="KW-0238">DNA-binding</keyword>
<keyword id="KW-1185">Reference proteome</keyword>
<proteinExistence type="inferred from homology"/>
<feature type="chain" id="PRO_1000003787" description="Nucleoid-associated protein Nwi_0368">
    <location>
        <begin position="1"/>
        <end position="106"/>
    </location>
</feature>
<protein>
    <recommendedName>
        <fullName evidence="1">Nucleoid-associated protein Nwi_0368</fullName>
    </recommendedName>
</protein>
<comment type="function">
    <text evidence="1">Binds to DNA and alters its conformation. May be involved in regulation of gene expression, nucleoid organization and DNA protection.</text>
</comment>
<comment type="subunit">
    <text evidence="1">Homodimer.</text>
</comment>
<comment type="subcellular location">
    <subcellularLocation>
        <location evidence="1">Cytoplasm</location>
        <location evidence="1">Nucleoid</location>
    </subcellularLocation>
</comment>
<comment type="similarity">
    <text evidence="1">Belongs to the YbaB/EbfC family.</text>
</comment>
<dbReference type="EMBL" id="CP000115">
    <property type="protein sequence ID" value="ABA03635.1"/>
    <property type="molecule type" value="Genomic_DNA"/>
</dbReference>
<dbReference type="RefSeq" id="WP_011313699.1">
    <property type="nucleotide sequence ID" value="NC_007406.1"/>
</dbReference>
<dbReference type="SMR" id="Q3SVQ6"/>
<dbReference type="STRING" id="323098.Nwi_0368"/>
<dbReference type="KEGG" id="nwi:Nwi_0368"/>
<dbReference type="eggNOG" id="COG0718">
    <property type="taxonomic scope" value="Bacteria"/>
</dbReference>
<dbReference type="HOGENOM" id="CLU_140930_0_1_5"/>
<dbReference type="OrthoDB" id="9803080at2"/>
<dbReference type="Proteomes" id="UP000002531">
    <property type="component" value="Chromosome"/>
</dbReference>
<dbReference type="GO" id="GO:0043590">
    <property type="term" value="C:bacterial nucleoid"/>
    <property type="evidence" value="ECO:0007669"/>
    <property type="project" value="UniProtKB-UniRule"/>
</dbReference>
<dbReference type="GO" id="GO:0005829">
    <property type="term" value="C:cytosol"/>
    <property type="evidence" value="ECO:0007669"/>
    <property type="project" value="TreeGrafter"/>
</dbReference>
<dbReference type="GO" id="GO:0003677">
    <property type="term" value="F:DNA binding"/>
    <property type="evidence" value="ECO:0007669"/>
    <property type="project" value="UniProtKB-UniRule"/>
</dbReference>
<dbReference type="Gene3D" id="3.30.1310.10">
    <property type="entry name" value="Nucleoid-associated protein YbaB-like domain"/>
    <property type="match status" value="1"/>
</dbReference>
<dbReference type="HAMAP" id="MF_00274">
    <property type="entry name" value="DNA_YbaB_EbfC"/>
    <property type="match status" value="1"/>
</dbReference>
<dbReference type="InterPro" id="IPR036894">
    <property type="entry name" value="YbaB-like_sf"/>
</dbReference>
<dbReference type="InterPro" id="IPR004401">
    <property type="entry name" value="YbaB/EbfC"/>
</dbReference>
<dbReference type="NCBIfam" id="TIGR00103">
    <property type="entry name" value="DNA_YbaB_EbfC"/>
    <property type="match status" value="1"/>
</dbReference>
<dbReference type="PANTHER" id="PTHR33449">
    <property type="entry name" value="NUCLEOID-ASSOCIATED PROTEIN YBAB"/>
    <property type="match status" value="1"/>
</dbReference>
<dbReference type="PANTHER" id="PTHR33449:SF1">
    <property type="entry name" value="NUCLEOID-ASSOCIATED PROTEIN YBAB"/>
    <property type="match status" value="1"/>
</dbReference>
<dbReference type="Pfam" id="PF02575">
    <property type="entry name" value="YbaB_DNA_bd"/>
    <property type="match status" value="1"/>
</dbReference>
<dbReference type="PIRSF" id="PIRSF004555">
    <property type="entry name" value="UCP004555"/>
    <property type="match status" value="1"/>
</dbReference>
<dbReference type="SUPFAM" id="SSF82607">
    <property type="entry name" value="YbaB-like"/>
    <property type="match status" value="1"/>
</dbReference>
<sequence length="106" mass="11354">MADFLGMMKQAAQFQSKMKAMQDELDQIEVDGASGGGLVTVRMTAKMEVKGISIDPSLIKPDEREILEDLVVTALADARRKAEVAMQEKMQALTGGLGLPPGLGFS</sequence>